<sequence>MVVAVYPGTFDPLTRGHEDLVRRASSIFDTLVVGVADSRNKKPFFTLEERLDIAHEVLGHYPNVQVMSFKGLLKDFVRSNNARVIVRGLRAVSDFEYEFQMAGMNRYLLPDVETMFMTPSDQYQFISGTIVREIAQLGGDVSKFVFPSVEQWLKEKVAALDPANGASAAQP</sequence>
<protein>
    <recommendedName>
        <fullName evidence="1">Phosphopantetheine adenylyltransferase</fullName>
        <ecNumber evidence="1">2.7.7.3</ecNumber>
    </recommendedName>
    <alternativeName>
        <fullName evidence="1">Dephospho-CoA pyrophosphorylase</fullName>
    </alternativeName>
    <alternativeName>
        <fullName evidence="1">Pantetheine-phosphate adenylyltransferase</fullName>
        <shortName evidence="1">PPAT</shortName>
    </alternativeName>
</protein>
<evidence type="ECO:0000255" key="1">
    <source>
        <dbReference type="HAMAP-Rule" id="MF_00151"/>
    </source>
</evidence>
<gene>
    <name evidence="1" type="primary">coaD</name>
    <name type="ordered locus">Bxeno_A0324</name>
    <name type="ORF">Bxe_A4138</name>
</gene>
<name>COAD_PARXL</name>
<proteinExistence type="inferred from homology"/>
<reference key="1">
    <citation type="journal article" date="2006" name="Proc. Natl. Acad. Sci. U.S.A.">
        <title>Burkholderia xenovorans LB400 harbors a multi-replicon, 9.73-Mbp genome shaped for versatility.</title>
        <authorList>
            <person name="Chain P.S.G."/>
            <person name="Denef V.J."/>
            <person name="Konstantinidis K.T."/>
            <person name="Vergez L.M."/>
            <person name="Agullo L."/>
            <person name="Reyes V.L."/>
            <person name="Hauser L."/>
            <person name="Cordova M."/>
            <person name="Gomez L."/>
            <person name="Gonzalez M."/>
            <person name="Land M."/>
            <person name="Lao V."/>
            <person name="Larimer F."/>
            <person name="LiPuma J.J."/>
            <person name="Mahenthiralingam E."/>
            <person name="Malfatti S.A."/>
            <person name="Marx C.J."/>
            <person name="Parnell J.J."/>
            <person name="Ramette A."/>
            <person name="Richardson P."/>
            <person name="Seeger M."/>
            <person name="Smith D."/>
            <person name="Spilker T."/>
            <person name="Sul W.J."/>
            <person name="Tsoi T.V."/>
            <person name="Ulrich L.E."/>
            <person name="Zhulin I.B."/>
            <person name="Tiedje J.M."/>
        </authorList>
    </citation>
    <scope>NUCLEOTIDE SEQUENCE [LARGE SCALE GENOMIC DNA]</scope>
    <source>
        <strain>LB400</strain>
    </source>
</reference>
<keyword id="KW-0067">ATP-binding</keyword>
<keyword id="KW-0173">Coenzyme A biosynthesis</keyword>
<keyword id="KW-0963">Cytoplasm</keyword>
<keyword id="KW-0460">Magnesium</keyword>
<keyword id="KW-0547">Nucleotide-binding</keyword>
<keyword id="KW-0548">Nucleotidyltransferase</keyword>
<keyword id="KW-1185">Reference proteome</keyword>
<keyword id="KW-0808">Transferase</keyword>
<accession>Q145X7</accession>
<dbReference type="EC" id="2.7.7.3" evidence="1"/>
<dbReference type="EMBL" id="CP000270">
    <property type="protein sequence ID" value="ABE28862.1"/>
    <property type="molecule type" value="Genomic_DNA"/>
</dbReference>
<dbReference type="RefSeq" id="WP_007179424.1">
    <property type="nucleotide sequence ID" value="NZ_CP008760.1"/>
</dbReference>
<dbReference type="SMR" id="Q145X7"/>
<dbReference type="STRING" id="266265.Bxe_A4138"/>
<dbReference type="KEGG" id="bxb:DR64_1815"/>
<dbReference type="KEGG" id="bxe:Bxe_A4138"/>
<dbReference type="eggNOG" id="COG0669">
    <property type="taxonomic scope" value="Bacteria"/>
</dbReference>
<dbReference type="OrthoDB" id="9806661at2"/>
<dbReference type="UniPathway" id="UPA00241">
    <property type="reaction ID" value="UER00355"/>
</dbReference>
<dbReference type="Proteomes" id="UP000001817">
    <property type="component" value="Chromosome 1"/>
</dbReference>
<dbReference type="GO" id="GO:0005737">
    <property type="term" value="C:cytoplasm"/>
    <property type="evidence" value="ECO:0007669"/>
    <property type="project" value="UniProtKB-SubCell"/>
</dbReference>
<dbReference type="GO" id="GO:0005524">
    <property type="term" value="F:ATP binding"/>
    <property type="evidence" value="ECO:0007669"/>
    <property type="project" value="UniProtKB-KW"/>
</dbReference>
<dbReference type="GO" id="GO:0004595">
    <property type="term" value="F:pantetheine-phosphate adenylyltransferase activity"/>
    <property type="evidence" value="ECO:0007669"/>
    <property type="project" value="UniProtKB-UniRule"/>
</dbReference>
<dbReference type="GO" id="GO:0015937">
    <property type="term" value="P:coenzyme A biosynthetic process"/>
    <property type="evidence" value="ECO:0007669"/>
    <property type="project" value="UniProtKB-UniRule"/>
</dbReference>
<dbReference type="CDD" id="cd02163">
    <property type="entry name" value="PPAT"/>
    <property type="match status" value="1"/>
</dbReference>
<dbReference type="Gene3D" id="3.40.50.620">
    <property type="entry name" value="HUPs"/>
    <property type="match status" value="1"/>
</dbReference>
<dbReference type="HAMAP" id="MF_00151">
    <property type="entry name" value="PPAT_bact"/>
    <property type="match status" value="1"/>
</dbReference>
<dbReference type="InterPro" id="IPR004821">
    <property type="entry name" value="Cyt_trans-like"/>
</dbReference>
<dbReference type="InterPro" id="IPR001980">
    <property type="entry name" value="PPAT"/>
</dbReference>
<dbReference type="InterPro" id="IPR014729">
    <property type="entry name" value="Rossmann-like_a/b/a_fold"/>
</dbReference>
<dbReference type="NCBIfam" id="TIGR01510">
    <property type="entry name" value="coaD_prev_kdtB"/>
    <property type="match status" value="1"/>
</dbReference>
<dbReference type="NCBIfam" id="TIGR00125">
    <property type="entry name" value="cyt_tran_rel"/>
    <property type="match status" value="1"/>
</dbReference>
<dbReference type="PANTHER" id="PTHR21342">
    <property type="entry name" value="PHOSPHOPANTETHEINE ADENYLYLTRANSFERASE"/>
    <property type="match status" value="1"/>
</dbReference>
<dbReference type="PANTHER" id="PTHR21342:SF1">
    <property type="entry name" value="PHOSPHOPANTETHEINE ADENYLYLTRANSFERASE"/>
    <property type="match status" value="1"/>
</dbReference>
<dbReference type="Pfam" id="PF01467">
    <property type="entry name" value="CTP_transf_like"/>
    <property type="match status" value="1"/>
</dbReference>
<dbReference type="PRINTS" id="PR01020">
    <property type="entry name" value="LPSBIOSNTHSS"/>
</dbReference>
<dbReference type="SUPFAM" id="SSF52374">
    <property type="entry name" value="Nucleotidylyl transferase"/>
    <property type="match status" value="1"/>
</dbReference>
<organism>
    <name type="scientific">Paraburkholderia xenovorans (strain LB400)</name>
    <dbReference type="NCBI Taxonomy" id="266265"/>
    <lineage>
        <taxon>Bacteria</taxon>
        <taxon>Pseudomonadati</taxon>
        <taxon>Pseudomonadota</taxon>
        <taxon>Betaproteobacteria</taxon>
        <taxon>Burkholderiales</taxon>
        <taxon>Burkholderiaceae</taxon>
        <taxon>Paraburkholderia</taxon>
    </lineage>
</organism>
<comment type="function">
    <text evidence="1">Reversibly transfers an adenylyl group from ATP to 4'-phosphopantetheine, yielding dephospho-CoA (dPCoA) and pyrophosphate.</text>
</comment>
<comment type="catalytic activity">
    <reaction evidence="1">
        <text>(R)-4'-phosphopantetheine + ATP + H(+) = 3'-dephospho-CoA + diphosphate</text>
        <dbReference type="Rhea" id="RHEA:19801"/>
        <dbReference type="ChEBI" id="CHEBI:15378"/>
        <dbReference type="ChEBI" id="CHEBI:30616"/>
        <dbReference type="ChEBI" id="CHEBI:33019"/>
        <dbReference type="ChEBI" id="CHEBI:57328"/>
        <dbReference type="ChEBI" id="CHEBI:61723"/>
        <dbReference type="EC" id="2.7.7.3"/>
    </reaction>
</comment>
<comment type="cofactor">
    <cofactor evidence="1">
        <name>Mg(2+)</name>
        <dbReference type="ChEBI" id="CHEBI:18420"/>
    </cofactor>
</comment>
<comment type="pathway">
    <text evidence="1">Cofactor biosynthesis; coenzyme A biosynthesis; CoA from (R)-pantothenate: step 4/5.</text>
</comment>
<comment type="subunit">
    <text evidence="1">Homohexamer.</text>
</comment>
<comment type="subcellular location">
    <subcellularLocation>
        <location evidence="1">Cytoplasm</location>
    </subcellularLocation>
</comment>
<comment type="similarity">
    <text evidence="1">Belongs to the bacterial CoaD family.</text>
</comment>
<feature type="chain" id="PRO_1000011115" description="Phosphopantetheine adenylyltransferase">
    <location>
        <begin position="1"/>
        <end position="171"/>
    </location>
</feature>
<feature type="binding site" evidence="1">
    <location>
        <begin position="9"/>
        <end position="10"/>
    </location>
    <ligand>
        <name>ATP</name>
        <dbReference type="ChEBI" id="CHEBI:30616"/>
    </ligand>
</feature>
<feature type="binding site" evidence="1">
    <location>
        <position position="9"/>
    </location>
    <ligand>
        <name>substrate</name>
    </ligand>
</feature>
<feature type="binding site" evidence="1">
    <location>
        <position position="17"/>
    </location>
    <ligand>
        <name>ATP</name>
        <dbReference type="ChEBI" id="CHEBI:30616"/>
    </ligand>
</feature>
<feature type="binding site" evidence="1">
    <location>
        <position position="41"/>
    </location>
    <ligand>
        <name>substrate</name>
    </ligand>
</feature>
<feature type="binding site" evidence="1">
    <location>
        <position position="73"/>
    </location>
    <ligand>
        <name>substrate</name>
    </ligand>
</feature>
<feature type="binding site" evidence="1">
    <location>
        <position position="87"/>
    </location>
    <ligand>
        <name>substrate</name>
    </ligand>
</feature>
<feature type="binding site" evidence="1">
    <location>
        <begin position="88"/>
        <end position="90"/>
    </location>
    <ligand>
        <name>ATP</name>
        <dbReference type="ChEBI" id="CHEBI:30616"/>
    </ligand>
</feature>
<feature type="binding site" evidence="1">
    <location>
        <position position="98"/>
    </location>
    <ligand>
        <name>ATP</name>
        <dbReference type="ChEBI" id="CHEBI:30616"/>
    </ligand>
</feature>
<feature type="binding site" evidence="1">
    <location>
        <begin position="123"/>
        <end position="129"/>
    </location>
    <ligand>
        <name>ATP</name>
        <dbReference type="ChEBI" id="CHEBI:30616"/>
    </ligand>
</feature>
<feature type="site" description="Transition state stabilizer" evidence="1">
    <location>
        <position position="17"/>
    </location>
</feature>